<reference key="1">
    <citation type="submission" date="2006-11" db="EMBL/GenBank/DDBJ databases">
        <title>Identification and characterization of a new conjugation/ type IVA secretion system (trb/tra) of L. pneumophila Corby localized on a mobile genomic island.</title>
        <authorList>
            <person name="Gloeckner G."/>
            <person name="Albert-Weissenberger C."/>
            <person name="Weinmann E."/>
            <person name="Jacobi S."/>
            <person name="Schunder E."/>
            <person name="Steinert M."/>
            <person name="Buchrieser C."/>
            <person name="Hacker J."/>
            <person name="Heuner K."/>
        </authorList>
    </citation>
    <scope>NUCLEOTIDE SEQUENCE [LARGE SCALE GENOMIC DNA]</scope>
    <source>
        <strain>Corby</strain>
    </source>
</reference>
<evidence type="ECO:0000255" key="1">
    <source>
        <dbReference type="HAMAP-Rule" id="MF_00534"/>
    </source>
</evidence>
<accession>A5IE87</accession>
<dbReference type="EC" id="6.1.1.22" evidence="1"/>
<dbReference type="EMBL" id="CP000675">
    <property type="protein sequence ID" value="ABQ55687.1"/>
    <property type="molecule type" value="Genomic_DNA"/>
</dbReference>
<dbReference type="RefSeq" id="WP_011947141.1">
    <property type="nucleotide sequence ID" value="NC_009494.2"/>
</dbReference>
<dbReference type="SMR" id="A5IE87"/>
<dbReference type="KEGG" id="lpc:LPC_1751"/>
<dbReference type="HOGENOM" id="CLU_004553_2_0_6"/>
<dbReference type="GO" id="GO:0005737">
    <property type="term" value="C:cytoplasm"/>
    <property type="evidence" value="ECO:0007669"/>
    <property type="project" value="UniProtKB-SubCell"/>
</dbReference>
<dbReference type="GO" id="GO:0004816">
    <property type="term" value="F:asparagine-tRNA ligase activity"/>
    <property type="evidence" value="ECO:0007669"/>
    <property type="project" value="UniProtKB-UniRule"/>
</dbReference>
<dbReference type="GO" id="GO:0005524">
    <property type="term" value="F:ATP binding"/>
    <property type="evidence" value="ECO:0007669"/>
    <property type="project" value="UniProtKB-UniRule"/>
</dbReference>
<dbReference type="GO" id="GO:0003676">
    <property type="term" value="F:nucleic acid binding"/>
    <property type="evidence" value="ECO:0007669"/>
    <property type="project" value="InterPro"/>
</dbReference>
<dbReference type="GO" id="GO:0006421">
    <property type="term" value="P:asparaginyl-tRNA aminoacylation"/>
    <property type="evidence" value="ECO:0007669"/>
    <property type="project" value="UniProtKB-UniRule"/>
</dbReference>
<dbReference type="CDD" id="cd00776">
    <property type="entry name" value="AsxRS_core"/>
    <property type="match status" value="1"/>
</dbReference>
<dbReference type="CDD" id="cd04318">
    <property type="entry name" value="EcAsnRS_like_N"/>
    <property type="match status" value="1"/>
</dbReference>
<dbReference type="FunFam" id="3.30.930.10:FF:000016">
    <property type="entry name" value="Asparagine--tRNA ligase"/>
    <property type="match status" value="1"/>
</dbReference>
<dbReference type="Gene3D" id="3.30.930.10">
    <property type="entry name" value="Bira Bifunctional Protein, Domain 2"/>
    <property type="match status" value="1"/>
</dbReference>
<dbReference type="Gene3D" id="2.40.50.140">
    <property type="entry name" value="Nucleic acid-binding proteins"/>
    <property type="match status" value="1"/>
</dbReference>
<dbReference type="HAMAP" id="MF_00534">
    <property type="entry name" value="Asn_tRNA_synth"/>
    <property type="match status" value="1"/>
</dbReference>
<dbReference type="InterPro" id="IPR004364">
    <property type="entry name" value="Aa-tRNA-synt_II"/>
</dbReference>
<dbReference type="InterPro" id="IPR006195">
    <property type="entry name" value="aa-tRNA-synth_II"/>
</dbReference>
<dbReference type="InterPro" id="IPR045864">
    <property type="entry name" value="aa-tRNA-synth_II/BPL/LPL"/>
</dbReference>
<dbReference type="InterPro" id="IPR004522">
    <property type="entry name" value="Asn-tRNA-ligase"/>
</dbReference>
<dbReference type="InterPro" id="IPR002312">
    <property type="entry name" value="Asp/Asn-tRNA-synth_IIb"/>
</dbReference>
<dbReference type="InterPro" id="IPR012340">
    <property type="entry name" value="NA-bd_OB-fold"/>
</dbReference>
<dbReference type="InterPro" id="IPR004365">
    <property type="entry name" value="NA-bd_OB_tRNA"/>
</dbReference>
<dbReference type="NCBIfam" id="TIGR00457">
    <property type="entry name" value="asnS"/>
    <property type="match status" value="1"/>
</dbReference>
<dbReference type="NCBIfam" id="NF003037">
    <property type="entry name" value="PRK03932.1"/>
    <property type="match status" value="1"/>
</dbReference>
<dbReference type="PANTHER" id="PTHR22594:SF34">
    <property type="entry name" value="ASPARAGINE--TRNA LIGASE, MITOCHONDRIAL-RELATED"/>
    <property type="match status" value="1"/>
</dbReference>
<dbReference type="PANTHER" id="PTHR22594">
    <property type="entry name" value="ASPARTYL/LYSYL-TRNA SYNTHETASE"/>
    <property type="match status" value="1"/>
</dbReference>
<dbReference type="Pfam" id="PF00152">
    <property type="entry name" value="tRNA-synt_2"/>
    <property type="match status" value="1"/>
</dbReference>
<dbReference type="Pfam" id="PF01336">
    <property type="entry name" value="tRNA_anti-codon"/>
    <property type="match status" value="1"/>
</dbReference>
<dbReference type="PRINTS" id="PR01042">
    <property type="entry name" value="TRNASYNTHASP"/>
</dbReference>
<dbReference type="SUPFAM" id="SSF55681">
    <property type="entry name" value="Class II aaRS and biotin synthetases"/>
    <property type="match status" value="1"/>
</dbReference>
<dbReference type="SUPFAM" id="SSF50249">
    <property type="entry name" value="Nucleic acid-binding proteins"/>
    <property type="match status" value="1"/>
</dbReference>
<dbReference type="PROSITE" id="PS50862">
    <property type="entry name" value="AA_TRNA_LIGASE_II"/>
    <property type="match status" value="1"/>
</dbReference>
<name>SYN_LEGPC</name>
<feature type="chain" id="PRO_1000211904" description="Asparagine--tRNA ligase">
    <location>
        <begin position="1"/>
        <end position="467"/>
    </location>
</feature>
<keyword id="KW-0030">Aminoacyl-tRNA synthetase</keyword>
<keyword id="KW-0067">ATP-binding</keyword>
<keyword id="KW-0963">Cytoplasm</keyword>
<keyword id="KW-0436">Ligase</keyword>
<keyword id="KW-0547">Nucleotide-binding</keyword>
<keyword id="KW-0648">Protein biosynthesis</keyword>
<proteinExistence type="inferred from homology"/>
<comment type="catalytic activity">
    <reaction evidence="1">
        <text>tRNA(Asn) + L-asparagine + ATP = L-asparaginyl-tRNA(Asn) + AMP + diphosphate + H(+)</text>
        <dbReference type="Rhea" id="RHEA:11180"/>
        <dbReference type="Rhea" id="RHEA-COMP:9659"/>
        <dbReference type="Rhea" id="RHEA-COMP:9674"/>
        <dbReference type="ChEBI" id="CHEBI:15378"/>
        <dbReference type="ChEBI" id="CHEBI:30616"/>
        <dbReference type="ChEBI" id="CHEBI:33019"/>
        <dbReference type="ChEBI" id="CHEBI:58048"/>
        <dbReference type="ChEBI" id="CHEBI:78442"/>
        <dbReference type="ChEBI" id="CHEBI:78515"/>
        <dbReference type="ChEBI" id="CHEBI:456215"/>
        <dbReference type="EC" id="6.1.1.22"/>
    </reaction>
</comment>
<comment type="subunit">
    <text evidence="1">Homodimer.</text>
</comment>
<comment type="subcellular location">
    <subcellularLocation>
        <location evidence="1">Cytoplasm</location>
    </subcellularLocation>
</comment>
<comment type="similarity">
    <text evidence="1">Belongs to the class-II aminoacyl-tRNA synthetase family.</text>
</comment>
<protein>
    <recommendedName>
        <fullName evidence="1">Asparagine--tRNA ligase</fullName>
        <ecNumber evidence="1">6.1.1.22</ecNumber>
    </recommendedName>
    <alternativeName>
        <fullName evidence="1">Asparaginyl-tRNA synthetase</fullName>
        <shortName evidence="1">AsnRS</shortName>
    </alternativeName>
</protein>
<organism>
    <name type="scientific">Legionella pneumophila (strain Corby)</name>
    <dbReference type="NCBI Taxonomy" id="400673"/>
    <lineage>
        <taxon>Bacteria</taxon>
        <taxon>Pseudomonadati</taxon>
        <taxon>Pseudomonadota</taxon>
        <taxon>Gammaproteobacteria</taxon>
        <taxon>Legionellales</taxon>
        <taxon>Legionellaceae</taxon>
        <taxon>Legionella</taxon>
    </lineage>
</organism>
<gene>
    <name evidence="1" type="primary">asnS</name>
    <name type="ordered locus">LPC_1751</name>
</gene>
<sequence length="467" mass="53212">MTEVFTIKQCLDGEISIDETVTVRGWVKTRRDSKAGLSFISLHDGSCFSPIQIVATDQLSNYHKEVTKLTAGCSMVATGKLVASQGKGQFFEIQAESIEVVGWVENPDTYPIQAKRHTLEFLREVAHLRPRTNTISAVTRVRHSLAQAIHRFYHEQGFFWVHTPIITASDCEGAGEMFRVSTLDLLNIPKNDKGQIDFSKDFFGRETFLTVSGQLNVEAYCMAMSKVYTFGPTFRAENSNTSRHLAEFWMIEPEIAFANLEDICKLSQSMLRYLCKTVLEERADDMDFFNQFVAPGCIERMEHIADSEFEMMTYTDAIKALEASDQKFEFPVSWGLDLQSEHERYLAEVLCKKPVIVTNYPQEIKGFYMRLNDDGKTVAAMDVLAPGIGEIIGGSQREERLEILDRRMDECNLNKEHYQWYRDLRRYGTVPHAGFGLGFERLISYVTGVSNVRDVIPFPRTPGHADY</sequence>